<gene>
    <name evidence="2" type="primary">COQ5</name>
</gene>
<organism>
    <name type="scientific">Pongo abelii</name>
    <name type="common">Sumatran orangutan</name>
    <name type="synonym">Pongo pygmaeus abelii</name>
    <dbReference type="NCBI Taxonomy" id="9601"/>
    <lineage>
        <taxon>Eukaryota</taxon>
        <taxon>Metazoa</taxon>
        <taxon>Chordata</taxon>
        <taxon>Craniata</taxon>
        <taxon>Vertebrata</taxon>
        <taxon>Euteleostomi</taxon>
        <taxon>Mammalia</taxon>
        <taxon>Eutheria</taxon>
        <taxon>Euarchontoglires</taxon>
        <taxon>Primates</taxon>
        <taxon>Haplorrhini</taxon>
        <taxon>Catarrhini</taxon>
        <taxon>Hominidae</taxon>
        <taxon>Pongo</taxon>
    </lineage>
</organism>
<protein>
    <recommendedName>
        <fullName evidence="2">2-methoxy-6-polyprenyl-1,4-benzoquinol methylase, mitochondrial</fullName>
        <ecNumber evidence="2">2.1.1.201</ecNumber>
    </recommendedName>
    <alternativeName>
        <fullName evidence="2">Ubiquinone biosynthesis methyltransferase COQ5</fullName>
    </alternativeName>
</protein>
<reference key="1">
    <citation type="submission" date="2004-11" db="EMBL/GenBank/DDBJ databases">
        <authorList>
            <consortium name="The German cDNA consortium"/>
        </authorList>
    </citation>
    <scope>NUCLEOTIDE SEQUENCE [LARGE SCALE MRNA]</scope>
    <source>
        <tissue>Kidney</tissue>
    </source>
</reference>
<proteinExistence type="evidence at transcript level"/>
<keyword id="KW-0472">Membrane</keyword>
<keyword id="KW-0489">Methyltransferase</keyword>
<keyword id="KW-0496">Mitochondrion</keyword>
<keyword id="KW-0999">Mitochondrion inner membrane</keyword>
<keyword id="KW-1185">Reference proteome</keyword>
<keyword id="KW-0949">S-adenosyl-L-methionine</keyword>
<keyword id="KW-0808">Transferase</keyword>
<keyword id="KW-0809">Transit peptide</keyword>
<keyword id="KW-0831">Ubiquinone biosynthesis</keyword>
<comment type="function">
    <text evidence="1">Methyltransferase required for the conversion of 2-decaprenyl-6-methoxy-1,4-benzoquinol (DDMQH2) to 2-decaprenyl-3-methyl-6-methoxy-1,4-benzoquinol (DMQH2).</text>
</comment>
<comment type="catalytic activity">
    <reaction evidence="2">
        <text>2-methoxy-6-(all-trans-decaprenyl)benzene-1,4-diol + S-adenosyl-L-methionine = 5-methoxy-2-methyl-3-(all-trans-decaprenyl)benzene-1,4-diol + S-adenosyl-L-homocysteine + H(+)</text>
        <dbReference type="Rhea" id="RHEA:44764"/>
        <dbReference type="ChEBI" id="CHEBI:15378"/>
        <dbReference type="ChEBI" id="CHEBI:57856"/>
        <dbReference type="ChEBI" id="CHEBI:59789"/>
        <dbReference type="ChEBI" id="CHEBI:64180"/>
        <dbReference type="ChEBI" id="CHEBI:64181"/>
        <dbReference type="EC" id="2.1.1.201"/>
    </reaction>
</comment>
<comment type="pathway">
    <text evidence="2">Cofactor biosynthesis; ubiquinone biosynthesis.</text>
</comment>
<comment type="subunit">
    <text evidence="1 2">Component of a multi-subunit COQ enzyme complex, composed of at least COQ3, COQ4, COQ5, COQ6, COQ7 and COQ9. Interacts with PYURF; the interaction is direct, stabilizes COQ5 protein and associates PYURF with COQ enzyme complex (By similarity).</text>
</comment>
<comment type="subcellular location">
    <subcellularLocation>
        <location evidence="2">Mitochondrion inner membrane</location>
        <topology evidence="2">Peripheral membrane protein</topology>
        <orientation evidence="2">Matrix side</orientation>
    </subcellularLocation>
</comment>
<comment type="similarity">
    <text evidence="2">Belongs to the class I-like SAM-binding methyltransferase superfamily. MenG/UbiE family.</text>
</comment>
<feature type="transit peptide" description="Mitochondrion" evidence="2">
    <location>
        <begin position="1"/>
        <end position="49"/>
    </location>
</feature>
<feature type="chain" id="PRO_0000228630" description="2-methoxy-6-polyprenyl-1,4-benzoquinol methylase, mitochondrial">
    <location>
        <begin position="50"/>
        <end position="327"/>
    </location>
</feature>
<feature type="binding site" evidence="2">
    <location>
        <position position="117"/>
    </location>
    <ligand>
        <name>S-adenosyl-L-methionine</name>
        <dbReference type="ChEBI" id="CHEBI:59789"/>
    </ligand>
</feature>
<feature type="binding site" evidence="2">
    <location>
        <position position="171"/>
    </location>
    <ligand>
        <name>S-adenosyl-L-methionine</name>
        <dbReference type="ChEBI" id="CHEBI:59789"/>
    </ligand>
</feature>
<feature type="binding site" evidence="2">
    <location>
        <begin position="199"/>
        <end position="200"/>
    </location>
    <ligand>
        <name>S-adenosyl-L-methionine</name>
        <dbReference type="ChEBI" id="CHEBI:59789"/>
    </ligand>
</feature>
<dbReference type="EC" id="2.1.1.201" evidence="2"/>
<dbReference type="EMBL" id="CR858638">
    <property type="protein sequence ID" value="CAH90854.1"/>
    <property type="molecule type" value="mRNA"/>
</dbReference>
<dbReference type="RefSeq" id="NP_001125488.1">
    <property type="nucleotide sequence ID" value="NM_001132016.1"/>
</dbReference>
<dbReference type="SMR" id="Q5RBK6"/>
<dbReference type="FunCoup" id="Q5RBK6">
    <property type="interactions" value="1122"/>
</dbReference>
<dbReference type="STRING" id="9601.ENSPPYP00000005736"/>
<dbReference type="GeneID" id="100172397"/>
<dbReference type="KEGG" id="pon:100172397"/>
<dbReference type="CTD" id="84274"/>
<dbReference type="eggNOG" id="KOG1540">
    <property type="taxonomic scope" value="Eukaryota"/>
</dbReference>
<dbReference type="InParanoid" id="Q5RBK6"/>
<dbReference type="OrthoDB" id="6329284at2759"/>
<dbReference type="UniPathway" id="UPA00232"/>
<dbReference type="Proteomes" id="UP000001595">
    <property type="component" value="Unplaced"/>
</dbReference>
<dbReference type="GO" id="GO:0031314">
    <property type="term" value="C:extrinsic component of mitochondrial inner membrane"/>
    <property type="evidence" value="ECO:0007669"/>
    <property type="project" value="UniProtKB-UniRule"/>
</dbReference>
<dbReference type="GO" id="GO:0008425">
    <property type="term" value="F:2-methoxy-6-polyprenyl-1,4-benzoquinol methyltransferase activity"/>
    <property type="evidence" value="ECO:0000250"/>
    <property type="project" value="UniProtKB"/>
</dbReference>
<dbReference type="GO" id="GO:0032259">
    <property type="term" value="P:methylation"/>
    <property type="evidence" value="ECO:0007669"/>
    <property type="project" value="UniProtKB-KW"/>
</dbReference>
<dbReference type="GO" id="GO:0006744">
    <property type="term" value="P:ubiquinone biosynthetic process"/>
    <property type="evidence" value="ECO:0000250"/>
    <property type="project" value="UniProtKB"/>
</dbReference>
<dbReference type="CDD" id="cd02440">
    <property type="entry name" value="AdoMet_MTases"/>
    <property type="match status" value="1"/>
</dbReference>
<dbReference type="FunFam" id="3.40.50.150:FF:000064">
    <property type="entry name" value="2-methoxy-6-polyprenyl-1,4-benzoquinol methylase, mitochondrial"/>
    <property type="match status" value="1"/>
</dbReference>
<dbReference type="Gene3D" id="3.40.50.150">
    <property type="entry name" value="Vaccinia Virus protein VP39"/>
    <property type="match status" value="1"/>
</dbReference>
<dbReference type="HAMAP" id="MF_01813">
    <property type="entry name" value="MenG_UbiE_methyltr"/>
    <property type="match status" value="1"/>
</dbReference>
<dbReference type="InterPro" id="IPR029063">
    <property type="entry name" value="SAM-dependent_MTases_sf"/>
</dbReference>
<dbReference type="InterPro" id="IPR004033">
    <property type="entry name" value="UbiE/COQ5_MeTrFase"/>
</dbReference>
<dbReference type="InterPro" id="IPR023576">
    <property type="entry name" value="UbiE/COQ5_MeTrFase_CS"/>
</dbReference>
<dbReference type="NCBIfam" id="TIGR01934">
    <property type="entry name" value="MenG_MenH_UbiE"/>
    <property type="match status" value="1"/>
</dbReference>
<dbReference type="NCBIfam" id="NF001244">
    <property type="entry name" value="PRK00216.1-5"/>
    <property type="match status" value="1"/>
</dbReference>
<dbReference type="PANTHER" id="PTHR43591:SF24">
    <property type="entry name" value="2-METHOXY-6-POLYPRENYL-1,4-BENZOQUINOL METHYLASE, MITOCHONDRIAL"/>
    <property type="match status" value="1"/>
</dbReference>
<dbReference type="PANTHER" id="PTHR43591">
    <property type="entry name" value="METHYLTRANSFERASE"/>
    <property type="match status" value="1"/>
</dbReference>
<dbReference type="Pfam" id="PF01209">
    <property type="entry name" value="Ubie_methyltran"/>
    <property type="match status" value="1"/>
</dbReference>
<dbReference type="SUPFAM" id="SSF53335">
    <property type="entry name" value="S-adenosyl-L-methionine-dependent methyltransferases"/>
    <property type="match status" value="1"/>
</dbReference>
<dbReference type="PROSITE" id="PS51608">
    <property type="entry name" value="SAM_MT_UBIE"/>
    <property type="match status" value="1"/>
</dbReference>
<dbReference type="PROSITE" id="PS01183">
    <property type="entry name" value="UBIE_1"/>
    <property type="match status" value="1"/>
</dbReference>
<dbReference type="PROSITE" id="PS01184">
    <property type="entry name" value="UBIE_2"/>
    <property type="match status" value="1"/>
</dbReference>
<accession>Q5RBK6</accession>
<name>COQ5_PONAB</name>
<evidence type="ECO:0000250" key="1">
    <source>
        <dbReference type="UniProtKB" id="Q5HYK3"/>
    </source>
</evidence>
<evidence type="ECO:0000255" key="2">
    <source>
        <dbReference type="HAMAP-Rule" id="MF_03191"/>
    </source>
</evidence>
<sequence>MAAPRSCALWSYCGRGWSWAMRGCQLLGLRSSWPGAPLSARLLPQEKRATETHFGSETVSEEEKGGKVYQVFESVAKKYDVMNDMMSLGIHRVWKDLLLWKMRPLPGTQLLDVAGGTGDIAFRFLNYVQSQHQRKQKRQLRAQQNLSWEEIAKEYQNEEDSLGGSRVVMCDINKEMLKVGKQKALAQGYRAGLAWVLGDAEELPFDDDKFDIYTIAFGIRNVTHIDQALQEAHRVLKPGGRFLCLEFSQVNNPLISRLYDLYSFQVIPVLGEVIAGDWKSYQYLVESIRRFPSQEEFKEMIEDAGFHKVTYESLTSGIVAIHSGFKL</sequence>